<evidence type="ECO:0000255" key="1">
    <source>
        <dbReference type="HAMAP-Rule" id="MF_00600"/>
    </source>
</evidence>
<evidence type="ECO:0000256" key="2">
    <source>
        <dbReference type="SAM" id="MobiDB-lite"/>
    </source>
</evidence>
<proteinExistence type="inferred from homology"/>
<comment type="function">
    <text evidence="1">Together with its co-chaperonin GroES, plays an essential role in assisting protein folding. The GroEL-GroES system forms a nano-cage that allows encapsulation of the non-native substrate proteins and provides a physical environment optimized to promote and accelerate protein folding.</text>
</comment>
<comment type="catalytic activity">
    <reaction evidence="1">
        <text>ATP + H2O + a folded polypeptide = ADP + phosphate + an unfolded polypeptide.</text>
        <dbReference type="EC" id="5.6.1.7"/>
    </reaction>
</comment>
<comment type="subunit">
    <text evidence="1">Forms a cylinder of 14 subunits composed of two heptameric rings stacked back-to-back. Interacts with the co-chaperonin GroES.</text>
</comment>
<comment type="subcellular location">
    <subcellularLocation>
        <location evidence="1">Cytoplasm</location>
    </subcellularLocation>
</comment>
<comment type="similarity">
    <text evidence="1">Belongs to the chaperonin (HSP60) family.</text>
</comment>
<protein>
    <recommendedName>
        <fullName evidence="1">Chaperonin GroEL</fullName>
        <ecNumber evidence="1">5.6.1.7</ecNumber>
    </recommendedName>
    <alternativeName>
        <fullName evidence="1">60 kDa chaperonin</fullName>
    </alternativeName>
    <alternativeName>
        <fullName evidence="1">Chaperonin-60</fullName>
        <shortName evidence="1">Cpn60</shortName>
    </alternativeName>
</protein>
<sequence length="547" mass="57853">MAAKHVVFGAEARERMLRGVDTLANAVKVTLGPKGRNVVIEKSFGAPRSTKDGVTVAKEIELEDKFENMGAQMLREVASKANDTAGDGTTTATVLAQAIVREGMKRVAAGMNPMDLKRGISKAVAEVVSDLAHHSKKVKTNEEIAQVGTISANGETEIGQMIAEAMAKVGNEGVITVEEAKALETELDVVEGMQFDRGYISPYFITNPDKMIVELEDVLILLHESKLSSLQPLLPILESVVQSQKPLLIIAEDVDGEALATLVVNKLRGGLKIAAVKAPGFGDRRKAMLQDLAVLTGGQVISEDLGIKLENVGMEMLGKAKRVSIDKDNTTIVDGGGKKKEIEARVSQIRKQIDDTSSDYDREKLQERLAKLAGGVAVIKVGGATEVEVKERKDRVDDALNATRAAVEEGIVPGGGVALLRSSKNIDVVGLNDDEKAGIDIVRKALEAPIRQIAENAGVEGSVVVNTILNNKSRSYGFNAQTEEYGDLVAMGVIDPVKVVRSALQNAASIASLLITTEAGIAEAPKKESAGGGGMPGGMGGMGGMDF</sequence>
<feature type="chain" id="PRO_1000025794" description="Chaperonin GroEL">
    <location>
        <begin position="1"/>
        <end position="547"/>
    </location>
</feature>
<feature type="region of interest" description="Disordered" evidence="2">
    <location>
        <begin position="526"/>
        <end position="547"/>
    </location>
</feature>
<feature type="compositionally biased region" description="Gly residues" evidence="2">
    <location>
        <begin position="530"/>
        <end position="547"/>
    </location>
</feature>
<feature type="binding site" evidence="1">
    <location>
        <begin position="30"/>
        <end position="33"/>
    </location>
    <ligand>
        <name>ATP</name>
        <dbReference type="ChEBI" id="CHEBI:30616"/>
    </ligand>
</feature>
<feature type="binding site" evidence="1">
    <location>
        <position position="51"/>
    </location>
    <ligand>
        <name>ATP</name>
        <dbReference type="ChEBI" id="CHEBI:30616"/>
    </ligand>
</feature>
<feature type="binding site" evidence="1">
    <location>
        <begin position="87"/>
        <end position="91"/>
    </location>
    <ligand>
        <name>ATP</name>
        <dbReference type="ChEBI" id="CHEBI:30616"/>
    </ligand>
</feature>
<feature type="binding site" evidence="1">
    <location>
        <position position="415"/>
    </location>
    <ligand>
        <name>ATP</name>
        <dbReference type="ChEBI" id="CHEBI:30616"/>
    </ligand>
</feature>
<feature type="binding site" evidence="1">
    <location>
        <position position="495"/>
    </location>
    <ligand>
        <name>ATP</name>
        <dbReference type="ChEBI" id="CHEBI:30616"/>
    </ligand>
</feature>
<name>CH60_HYPNA</name>
<gene>
    <name evidence="1" type="primary">groEL</name>
    <name evidence="1" type="synonym">groL</name>
    <name type="ordered locus">HNE_1962</name>
</gene>
<accession>Q0C0T0</accession>
<organism>
    <name type="scientific">Hyphomonas neptunium (strain ATCC 15444)</name>
    <dbReference type="NCBI Taxonomy" id="228405"/>
    <lineage>
        <taxon>Bacteria</taxon>
        <taxon>Pseudomonadati</taxon>
        <taxon>Pseudomonadota</taxon>
        <taxon>Alphaproteobacteria</taxon>
        <taxon>Hyphomonadales</taxon>
        <taxon>Hyphomonadaceae</taxon>
        <taxon>Hyphomonas</taxon>
    </lineage>
</organism>
<dbReference type="EC" id="5.6.1.7" evidence="1"/>
<dbReference type="EMBL" id="CP000158">
    <property type="protein sequence ID" value="ABI78727.1"/>
    <property type="molecule type" value="Genomic_DNA"/>
</dbReference>
<dbReference type="RefSeq" id="WP_011646963.1">
    <property type="nucleotide sequence ID" value="NC_008358.1"/>
</dbReference>
<dbReference type="SMR" id="Q0C0T0"/>
<dbReference type="STRING" id="228405.HNE_1962"/>
<dbReference type="KEGG" id="hne:HNE_1962"/>
<dbReference type="eggNOG" id="COG0459">
    <property type="taxonomic scope" value="Bacteria"/>
</dbReference>
<dbReference type="HOGENOM" id="CLU_016503_3_0_5"/>
<dbReference type="Proteomes" id="UP000001959">
    <property type="component" value="Chromosome"/>
</dbReference>
<dbReference type="GO" id="GO:0005737">
    <property type="term" value="C:cytoplasm"/>
    <property type="evidence" value="ECO:0007669"/>
    <property type="project" value="UniProtKB-SubCell"/>
</dbReference>
<dbReference type="GO" id="GO:0005524">
    <property type="term" value="F:ATP binding"/>
    <property type="evidence" value="ECO:0007669"/>
    <property type="project" value="UniProtKB-UniRule"/>
</dbReference>
<dbReference type="GO" id="GO:0140662">
    <property type="term" value="F:ATP-dependent protein folding chaperone"/>
    <property type="evidence" value="ECO:0007669"/>
    <property type="project" value="InterPro"/>
</dbReference>
<dbReference type="GO" id="GO:0016853">
    <property type="term" value="F:isomerase activity"/>
    <property type="evidence" value="ECO:0007669"/>
    <property type="project" value="UniProtKB-KW"/>
</dbReference>
<dbReference type="GO" id="GO:0051082">
    <property type="term" value="F:unfolded protein binding"/>
    <property type="evidence" value="ECO:0007669"/>
    <property type="project" value="UniProtKB-UniRule"/>
</dbReference>
<dbReference type="GO" id="GO:0042026">
    <property type="term" value="P:protein refolding"/>
    <property type="evidence" value="ECO:0007669"/>
    <property type="project" value="UniProtKB-UniRule"/>
</dbReference>
<dbReference type="CDD" id="cd03344">
    <property type="entry name" value="GroEL"/>
    <property type="match status" value="1"/>
</dbReference>
<dbReference type="FunFam" id="1.10.560.10:FF:000001">
    <property type="entry name" value="60 kDa chaperonin"/>
    <property type="match status" value="1"/>
</dbReference>
<dbReference type="FunFam" id="3.50.7.10:FF:000001">
    <property type="entry name" value="60 kDa chaperonin"/>
    <property type="match status" value="1"/>
</dbReference>
<dbReference type="Gene3D" id="3.50.7.10">
    <property type="entry name" value="GroEL"/>
    <property type="match status" value="1"/>
</dbReference>
<dbReference type="Gene3D" id="1.10.560.10">
    <property type="entry name" value="GroEL-like equatorial domain"/>
    <property type="match status" value="1"/>
</dbReference>
<dbReference type="Gene3D" id="3.30.260.10">
    <property type="entry name" value="TCP-1-like chaperonin intermediate domain"/>
    <property type="match status" value="1"/>
</dbReference>
<dbReference type="HAMAP" id="MF_00600">
    <property type="entry name" value="CH60"/>
    <property type="match status" value="1"/>
</dbReference>
<dbReference type="InterPro" id="IPR018370">
    <property type="entry name" value="Chaperonin_Cpn60_CS"/>
</dbReference>
<dbReference type="InterPro" id="IPR001844">
    <property type="entry name" value="Cpn60/GroEL"/>
</dbReference>
<dbReference type="InterPro" id="IPR002423">
    <property type="entry name" value="Cpn60/GroEL/TCP-1"/>
</dbReference>
<dbReference type="InterPro" id="IPR027409">
    <property type="entry name" value="GroEL-like_apical_dom_sf"/>
</dbReference>
<dbReference type="InterPro" id="IPR027413">
    <property type="entry name" value="GROEL-like_equatorial_sf"/>
</dbReference>
<dbReference type="InterPro" id="IPR027410">
    <property type="entry name" value="TCP-1-like_intermed_sf"/>
</dbReference>
<dbReference type="NCBIfam" id="TIGR02348">
    <property type="entry name" value="GroEL"/>
    <property type="match status" value="1"/>
</dbReference>
<dbReference type="NCBIfam" id="NF000592">
    <property type="entry name" value="PRK00013.1"/>
    <property type="match status" value="1"/>
</dbReference>
<dbReference type="NCBIfam" id="NF009487">
    <property type="entry name" value="PRK12849.1"/>
    <property type="match status" value="1"/>
</dbReference>
<dbReference type="NCBIfam" id="NF009488">
    <property type="entry name" value="PRK12850.1"/>
    <property type="match status" value="1"/>
</dbReference>
<dbReference type="NCBIfam" id="NF009489">
    <property type="entry name" value="PRK12851.1"/>
    <property type="match status" value="1"/>
</dbReference>
<dbReference type="PANTHER" id="PTHR45633">
    <property type="entry name" value="60 KDA HEAT SHOCK PROTEIN, MITOCHONDRIAL"/>
    <property type="match status" value="1"/>
</dbReference>
<dbReference type="Pfam" id="PF00118">
    <property type="entry name" value="Cpn60_TCP1"/>
    <property type="match status" value="1"/>
</dbReference>
<dbReference type="PRINTS" id="PR00298">
    <property type="entry name" value="CHAPERONIN60"/>
</dbReference>
<dbReference type="SUPFAM" id="SSF52029">
    <property type="entry name" value="GroEL apical domain-like"/>
    <property type="match status" value="1"/>
</dbReference>
<dbReference type="SUPFAM" id="SSF48592">
    <property type="entry name" value="GroEL equatorial domain-like"/>
    <property type="match status" value="1"/>
</dbReference>
<dbReference type="SUPFAM" id="SSF54849">
    <property type="entry name" value="GroEL-intermediate domain like"/>
    <property type="match status" value="1"/>
</dbReference>
<dbReference type="PROSITE" id="PS00296">
    <property type="entry name" value="CHAPERONINS_CPN60"/>
    <property type="match status" value="1"/>
</dbReference>
<keyword id="KW-0067">ATP-binding</keyword>
<keyword id="KW-0143">Chaperone</keyword>
<keyword id="KW-0963">Cytoplasm</keyword>
<keyword id="KW-0413">Isomerase</keyword>
<keyword id="KW-0547">Nucleotide-binding</keyword>
<keyword id="KW-1185">Reference proteome</keyword>
<reference key="1">
    <citation type="journal article" date="2006" name="J. Bacteriol.">
        <title>Comparative genomic evidence for a close relationship between the dimorphic prosthecate bacteria Hyphomonas neptunium and Caulobacter crescentus.</title>
        <authorList>
            <person name="Badger J.H."/>
            <person name="Hoover T.R."/>
            <person name="Brun Y.V."/>
            <person name="Weiner R.M."/>
            <person name="Laub M.T."/>
            <person name="Alexandre G."/>
            <person name="Mrazek J."/>
            <person name="Ren Q."/>
            <person name="Paulsen I.T."/>
            <person name="Nelson K.E."/>
            <person name="Khouri H.M."/>
            <person name="Radune D."/>
            <person name="Sosa J."/>
            <person name="Dodson R.J."/>
            <person name="Sullivan S.A."/>
            <person name="Rosovitz M.J."/>
            <person name="Madupu R."/>
            <person name="Brinkac L.M."/>
            <person name="Durkin A.S."/>
            <person name="Daugherty S.C."/>
            <person name="Kothari S.P."/>
            <person name="Giglio M.G."/>
            <person name="Zhou L."/>
            <person name="Haft D.H."/>
            <person name="Selengut J.D."/>
            <person name="Davidsen T.M."/>
            <person name="Yang Q."/>
            <person name="Zafar N."/>
            <person name="Ward N.L."/>
        </authorList>
    </citation>
    <scope>NUCLEOTIDE SEQUENCE [LARGE SCALE GENOMIC DNA]</scope>
    <source>
        <strain>ATCC 15444</strain>
    </source>
</reference>